<accession>P80507</accession>
<accession>P74337</accession>
<protein>
    <recommendedName>
        <fullName evidence="1">Inorganic pyrophosphatase</fullName>
        <ecNumber evidence="1">3.6.1.1</ecNumber>
    </recommendedName>
    <alternativeName>
        <fullName evidence="1">Pyrophosphate phospho-hydrolase</fullName>
        <shortName evidence="1">PPase</shortName>
    </alternativeName>
</protein>
<organism>
    <name type="scientific">Synechocystis sp. (strain ATCC 27184 / PCC 6803 / Kazusa)</name>
    <dbReference type="NCBI Taxonomy" id="1111708"/>
    <lineage>
        <taxon>Bacteria</taxon>
        <taxon>Bacillati</taxon>
        <taxon>Cyanobacteriota</taxon>
        <taxon>Cyanophyceae</taxon>
        <taxon>Synechococcales</taxon>
        <taxon>Merismopediaceae</taxon>
        <taxon>Synechocystis</taxon>
    </lineage>
</organism>
<feature type="chain" id="PRO_0000137534" description="Inorganic pyrophosphatase">
    <location>
        <begin position="1"/>
        <end position="169"/>
    </location>
</feature>
<feature type="binding site" evidence="1">
    <location>
        <position position="28"/>
    </location>
    <ligand>
        <name>substrate</name>
    </ligand>
</feature>
<feature type="binding site" evidence="1">
    <location>
        <position position="42"/>
    </location>
    <ligand>
        <name>substrate</name>
    </ligand>
</feature>
<feature type="binding site" evidence="1">
    <location>
        <position position="54"/>
    </location>
    <ligand>
        <name>substrate</name>
    </ligand>
</feature>
<feature type="binding site" evidence="1">
    <location>
        <position position="64"/>
    </location>
    <ligand>
        <name>Mg(2+)</name>
        <dbReference type="ChEBI" id="CHEBI:18420"/>
        <label>1</label>
    </ligand>
</feature>
<feature type="binding site" evidence="1">
    <location>
        <position position="69"/>
    </location>
    <ligand>
        <name>Mg(2+)</name>
        <dbReference type="ChEBI" id="CHEBI:18420"/>
        <label>1</label>
    </ligand>
</feature>
<feature type="binding site" evidence="1">
    <location>
        <position position="69"/>
    </location>
    <ligand>
        <name>Mg(2+)</name>
        <dbReference type="ChEBI" id="CHEBI:18420"/>
        <label>2</label>
    </ligand>
</feature>
<feature type="binding site" evidence="1">
    <location>
        <position position="101"/>
    </location>
    <ligand>
        <name>Mg(2+)</name>
        <dbReference type="ChEBI" id="CHEBI:18420"/>
        <label>1</label>
    </ligand>
</feature>
<feature type="binding site" evidence="1">
    <location>
        <position position="138"/>
    </location>
    <ligand>
        <name>substrate</name>
    </ligand>
</feature>
<feature type="modified residue" description="N-formylmethionine" evidence="2">
    <location>
        <position position="1"/>
    </location>
</feature>
<feature type="sequence conflict" description="In Ref. 1; AA sequence." evidence="3" ref="1">
    <original>C</original>
    <variation>N</variation>
    <location>
        <position position="37"/>
    </location>
</feature>
<name>IPYR_SYNY3</name>
<keyword id="KW-0963">Cytoplasm</keyword>
<keyword id="KW-0903">Direct protein sequencing</keyword>
<keyword id="KW-0291">Formylation</keyword>
<keyword id="KW-0378">Hydrolase</keyword>
<keyword id="KW-0460">Magnesium</keyword>
<keyword id="KW-0479">Metal-binding</keyword>
<keyword id="KW-1185">Reference proteome</keyword>
<comment type="function">
    <text>Hydrolyzes PPi generated in anabolic reactions.</text>
</comment>
<comment type="function">
    <text evidence="1">Catalyzes the hydrolysis of inorganic pyrophosphate (PPi) forming two phosphate ions.</text>
</comment>
<comment type="catalytic activity">
    <reaction evidence="1 2">
        <text>diphosphate + H2O = 2 phosphate + H(+)</text>
        <dbReference type="Rhea" id="RHEA:24576"/>
        <dbReference type="ChEBI" id="CHEBI:15377"/>
        <dbReference type="ChEBI" id="CHEBI:15378"/>
        <dbReference type="ChEBI" id="CHEBI:33019"/>
        <dbReference type="ChEBI" id="CHEBI:43474"/>
        <dbReference type="EC" id="3.6.1.1"/>
    </reaction>
</comment>
<comment type="cofactor">
    <cofactor evidence="1 2">
        <name>Mg(2+)</name>
        <dbReference type="ChEBI" id="CHEBI:18420"/>
    </cofactor>
    <text evidence="2">In the presence of Zn(2+) ions, activity is 13% of maximum, in the presence of Mn(2+), Cu(2+), Fe(2+) or Co(2+) ions, activity is very low. In the absence of metal ions, there is no activity.</text>
</comment>
<comment type="activity regulation">
    <text evidence="2">Inhibited by ATP, but not by fructose 1,6-bisphosphate or 2-phosphoglycerate.</text>
</comment>
<comment type="biophysicochemical properties">
    <kinetics>
        <KM evidence="2">2.8 uM for PPi</KM>
    </kinetics>
</comment>
<comment type="subunit">
    <text evidence="1 2">Homohexamer.</text>
</comment>
<comment type="subcellular location">
    <subcellularLocation>
        <location evidence="1">Cytoplasm</location>
    </subcellularLocation>
</comment>
<comment type="similarity">
    <text evidence="1">Belongs to the PPase family.</text>
</comment>
<comment type="sequence caution" evidence="3">
    <conflict type="erroneous initiation">
        <sequence resource="EMBL-CDS" id="BAA18431"/>
    </conflict>
    <text>Truncated N-terminus.</text>
</comment>
<dbReference type="EC" id="3.6.1.1" evidence="1"/>
<dbReference type="EMBL" id="AJ252207">
    <property type="protein sequence ID" value="CAC81010.1"/>
    <property type="molecule type" value="Genomic_DNA"/>
</dbReference>
<dbReference type="EMBL" id="BA000022">
    <property type="protein sequence ID" value="BAA18431.1"/>
    <property type="status" value="ALT_INIT"/>
    <property type="molecule type" value="Genomic_DNA"/>
</dbReference>
<dbReference type="PIR" id="S76172">
    <property type="entry name" value="S76172"/>
</dbReference>
<dbReference type="SMR" id="P80507"/>
<dbReference type="STRING" id="1148.gene:10499307"/>
<dbReference type="PaxDb" id="1148-1653518"/>
<dbReference type="EnsemblBacteria" id="BAA18431">
    <property type="protein sequence ID" value="BAA18431"/>
    <property type="gene ID" value="BAA18431"/>
</dbReference>
<dbReference type="KEGG" id="syn:slr1622"/>
<dbReference type="eggNOG" id="COG0221">
    <property type="taxonomic scope" value="Bacteria"/>
</dbReference>
<dbReference type="InParanoid" id="P80507"/>
<dbReference type="PhylomeDB" id="P80507"/>
<dbReference type="BRENDA" id="3.6.1.1">
    <property type="organism ID" value="382"/>
</dbReference>
<dbReference type="SABIO-RK" id="P80507"/>
<dbReference type="Proteomes" id="UP000001425">
    <property type="component" value="Chromosome"/>
</dbReference>
<dbReference type="GO" id="GO:0005737">
    <property type="term" value="C:cytoplasm"/>
    <property type="evidence" value="ECO:0007669"/>
    <property type="project" value="UniProtKB-SubCell"/>
</dbReference>
<dbReference type="GO" id="GO:0004427">
    <property type="term" value="F:inorganic diphosphate phosphatase activity"/>
    <property type="evidence" value="ECO:0000318"/>
    <property type="project" value="GO_Central"/>
</dbReference>
<dbReference type="GO" id="GO:0000287">
    <property type="term" value="F:magnesium ion binding"/>
    <property type="evidence" value="ECO:0007669"/>
    <property type="project" value="UniProtKB-UniRule"/>
</dbReference>
<dbReference type="GO" id="GO:0006796">
    <property type="term" value="P:phosphate-containing compound metabolic process"/>
    <property type="evidence" value="ECO:0000318"/>
    <property type="project" value="GO_Central"/>
</dbReference>
<dbReference type="CDD" id="cd00412">
    <property type="entry name" value="pyrophosphatase"/>
    <property type="match status" value="1"/>
</dbReference>
<dbReference type="FunFam" id="3.90.80.10:FF:000003">
    <property type="entry name" value="Inorganic pyrophosphatase"/>
    <property type="match status" value="1"/>
</dbReference>
<dbReference type="Gene3D" id="3.90.80.10">
    <property type="entry name" value="Inorganic pyrophosphatase"/>
    <property type="match status" value="1"/>
</dbReference>
<dbReference type="HAMAP" id="MF_00209">
    <property type="entry name" value="Inorganic_PPase"/>
    <property type="match status" value="1"/>
</dbReference>
<dbReference type="InterPro" id="IPR008162">
    <property type="entry name" value="Pyrophosphatase"/>
</dbReference>
<dbReference type="InterPro" id="IPR036649">
    <property type="entry name" value="Pyrophosphatase_sf"/>
</dbReference>
<dbReference type="PANTHER" id="PTHR10286">
    <property type="entry name" value="INORGANIC PYROPHOSPHATASE"/>
    <property type="match status" value="1"/>
</dbReference>
<dbReference type="Pfam" id="PF00719">
    <property type="entry name" value="Pyrophosphatase"/>
    <property type="match status" value="1"/>
</dbReference>
<dbReference type="SUPFAM" id="SSF50324">
    <property type="entry name" value="Inorganic pyrophosphatase"/>
    <property type="match status" value="1"/>
</dbReference>
<dbReference type="PROSITE" id="PS00387">
    <property type="entry name" value="PPASE"/>
    <property type="match status" value="1"/>
</dbReference>
<proteinExistence type="evidence at protein level"/>
<sequence length="169" mass="19088">MDLSRIPAQPKAGLINVLIEIPAGSKNKYEFDKDMNCFALDRVLYSSVQYPYDYGFIPNTLADDGDPLDGMVIMDQPTFPGCVITARPIGMLEMIDGGDRDEKILCVPAKDPRYTYVKSINDLAGHRLDEIAEFFRSYKNLEKKVTEILGWKDVDAVLPLVEECVKNYK</sequence>
<reference key="1">
    <citation type="journal article" date="2007" name="FEBS J.">
        <title>Comparative biochemical and functional studies of family I soluble inorganic pyrophosphatases from photosynthetic bacteria.</title>
        <authorList>
            <person name="Gomez-Garcia M.R."/>
            <person name="Losada M."/>
            <person name="Serrano A."/>
        </authorList>
    </citation>
    <scope>NUCLEOTIDE SEQUENCE [GENOMIC DNA]</scope>
    <scope>PROTEIN SEQUENCE OF 1-43</scope>
    <scope>CATALYTIC ACTIVITY</scope>
    <scope>COFACTOR</scope>
    <scope>ACTIVITY REGULATION</scope>
    <scope>BIOPHYSICOCHEMICAL PROPERTIES</scope>
    <scope>SUBUNIT</scope>
    <scope>FORMYLATION AT MET-1</scope>
</reference>
<reference key="2">
    <citation type="journal article" date="1996" name="DNA Res.">
        <title>Sequence analysis of the genome of the unicellular cyanobacterium Synechocystis sp. strain PCC6803. II. Sequence determination of the entire genome and assignment of potential protein-coding regions.</title>
        <authorList>
            <person name="Kaneko T."/>
            <person name="Sato S."/>
            <person name="Kotani H."/>
            <person name="Tanaka A."/>
            <person name="Asamizu E."/>
            <person name="Nakamura Y."/>
            <person name="Miyajima N."/>
            <person name="Hirosawa M."/>
            <person name="Sugiura M."/>
            <person name="Sasamoto S."/>
            <person name="Kimura T."/>
            <person name="Hosouchi T."/>
            <person name="Matsuno A."/>
            <person name="Muraki A."/>
            <person name="Nakazaki N."/>
            <person name="Naruo K."/>
            <person name="Okumura S."/>
            <person name="Shimpo S."/>
            <person name="Takeuchi C."/>
            <person name="Wada T."/>
            <person name="Watanabe A."/>
            <person name="Yamada M."/>
            <person name="Yasuda M."/>
            <person name="Tabata S."/>
        </authorList>
    </citation>
    <scope>NUCLEOTIDE SEQUENCE [LARGE SCALE GENOMIC DNA]</scope>
    <source>
        <strain>ATCC 27184 / PCC 6803 / Kazusa</strain>
    </source>
</reference>
<reference key="3">
    <citation type="journal article" date="1997" name="Electrophoresis">
        <title>Towards a proteome project of cyanobacterium Synechocystis sp. strain PCC6803: linking 130 protein spots with their respective genes.</title>
        <authorList>
            <person name="Sazuka T."/>
            <person name="Ohara O."/>
        </authorList>
    </citation>
    <scope>PROTEIN SEQUENCE OF 1-20</scope>
</reference>
<gene>
    <name evidence="1" type="primary">ppa</name>
    <name type="synonym">ipyR</name>
    <name type="ordered locus">slr1622</name>
</gene>
<evidence type="ECO:0000255" key="1">
    <source>
        <dbReference type="HAMAP-Rule" id="MF_00209"/>
    </source>
</evidence>
<evidence type="ECO:0000269" key="2">
    <source>
    </source>
</evidence>
<evidence type="ECO:0000305" key="3"/>